<keyword id="KW-0963">Cytoplasm</keyword>
<keyword id="KW-0378">Hydrolase</keyword>
<keyword id="KW-0546">Nucleotide metabolism</keyword>
<keyword id="KW-1185">Reference proteome</keyword>
<gene>
    <name type="ordered locus">Wbm0192</name>
</gene>
<evidence type="ECO:0000255" key="1">
    <source>
        <dbReference type="HAMAP-Rule" id="MF_00528"/>
    </source>
</evidence>
<reference key="1">
    <citation type="journal article" date="2005" name="PLoS Biol.">
        <title>The Wolbachia genome of Brugia malayi: endosymbiont evolution within a human pathogenic nematode.</title>
        <authorList>
            <person name="Foster J."/>
            <person name="Ganatra M."/>
            <person name="Kamal I."/>
            <person name="Ware J."/>
            <person name="Makarova K."/>
            <person name="Ivanova N."/>
            <person name="Bhattacharyya A."/>
            <person name="Kapatral V."/>
            <person name="Kumar S."/>
            <person name="Posfai J."/>
            <person name="Vincze T."/>
            <person name="Ingram J."/>
            <person name="Moran L."/>
            <person name="Lapidus A."/>
            <person name="Omelchenko M."/>
            <person name="Kyrpides N."/>
            <person name="Ghedin E."/>
            <person name="Wang S."/>
            <person name="Goltsman E."/>
            <person name="Joukov V."/>
            <person name="Ostrovskaya O."/>
            <person name="Tsukerman K."/>
            <person name="Mazur M."/>
            <person name="Comb D."/>
            <person name="Koonin E."/>
            <person name="Slatko B."/>
        </authorList>
    </citation>
    <scope>NUCLEOTIDE SEQUENCE [LARGE SCALE GENOMIC DNA]</scope>
    <source>
        <strain>TRS</strain>
    </source>
</reference>
<feature type="chain" id="PRO_0000267464" description="dTTP/UTP pyrophosphatase">
    <location>
        <begin position="1"/>
        <end position="198"/>
    </location>
</feature>
<feature type="active site" description="Proton acceptor" evidence="1">
    <location>
        <position position="75"/>
    </location>
</feature>
<feature type="site" description="Important for substrate specificity" evidence="1">
    <location>
        <position position="17"/>
    </location>
</feature>
<feature type="site" description="Important for substrate specificity" evidence="1">
    <location>
        <position position="76"/>
    </location>
</feature>
<feature type="site" description="Important for substrate specificity" evidence="1">
    <location>
        <position position="160"/>
    </location>
</feature>
<accession>Q5GT91</accession>
<proteinExistence type="inferred from homology"/>
<organism>
    <name type="scientific">Wolbachia sp. subsp. Brugia malayi (strain TRS)</name>
    <dbReference type="NCBI Taxonomy" id="292805"/>
    <lineage>
        <taxon>Bacteria</taxon>
        <taxon>Pseudomonadati</taxon>
        <taxon>Pseudomonadota</taxon>
        <taxon>Alphaproteobacteria</taxon>
        <taxon>Rickettsiales</taxon>
        <taxon>Anaplasmataceae</taxon>
        <taxon>Wolbachieae</taxon>
        <taxon>Wolbachia</taxon>
    </lineage>
</organism>
<protein>
    <recommendedName>
        <fullName evidence="1">dTTP/UTP pyrophosphatase</fullName>
        <shortName evidence="1">dTTPase/UTPase</shortName>
        <ecNumber evidence="1">3.6.1.9</ecNumber>
    </recommendedName>
    <alternativeName>
        <fullName evidence="1">Nucleoside triphosphate pyrophosphatase</fullName>
    </alternativeName>
    <alternativeName>
        <fullName evidence="1">Nucleotide pyrophosphatase</fullName>
        <shortName evidence="1">Nucleotide PPase</shortName>
    </alternativeName>
</protein>
<name>NTPPA_WOLTR</name>
<dbReference type="EC" id="3.6.1.9" evidence="1"/>
<dbReference type="EMBL" id="AE017321">
    <property type="protein sequence ID" value="AAW70783.1"/>
    <property type="molecule type" value="Genomic_DNA"/>
</dbReference>
<dbReference type="RefSeq" id="WP_011256393.1">
    <property type="nucleotide sequence ID" value="NC_006833.1"/>
</dbReference>
<dbReference type="SMR" id="Q5GT91"/>
<dbReference type="STRING" id="292805.Wbm0192"/>
<dbReference type="KEGG" id="wbm:Wbm0192"/>
<dbReference type="eggNOG" id="COG0424">
    <property type="taxonomic scope" value="Bacteria"/>
</dbReference>
<dbReference type="HOGENOM" id="CLU_040416_2_0_5"/>
<dbReference type="Proteomes" id="UP000000534">
    <property type="component" value="Chromosome"/>
</dbReference>
<dbReference type="GO" id="GO:0005737">
    <property type="term" value="C:cytoplasm"/>
    <property type="evidence" value="ECO:0007669"/>
    <property type="project" value="UniProtKB-SubCell"/>
</dbReference>
<dbReference type="GO" id="GO:0036218">
    <property type="term" value="F:dTTP diphosphatase activity"/>
    <property type="evidence" value="ECO:0007669"/>
    <property type="project" value="RHEA"/>
</dbReference>
<dbReference type="GO" id="GO:0036221">
    <property type="term" value="F:UTP diphosphatase activity"/>
    <property type="evidence" value="ECO:0007669"/>
    <property type="project" value="RHEA"/>
</dbReference>
<dbReference type="GO" id="GO:0009117">
    <property type="term" value="P:nucleotide metabolic process"/>
    <property type="evidence" value="ECO:0007669"/>
    <property type="project" value="UniProtKB-KW"/>
</dbReference>
<dbReference type="CDD" id="cd00555">
    <property type="entry name" value="Maf"/>
    <property type="match status" value="1"/>
</dbReference>
<dbReference type="Gene3D" id="3.90.950.10">
    <property type="match status" value="1"/>
</dbReference>
<dbReference type="HAMAP" id="MF_00528">
    <property type="entry name" value="Maf"/>
    <property type="match status" value="1"/>
</dbReference>
<dbReference type="InterPro" id="IPR029001">
    <property type="entry name" value="ITPase-like_fam"/>
</dbReference>
<dbReference type="InterPro" id="IPR003697">
    <property type="entry name" value="Maf-like"/>
</dbReference>
<dbReference type="NCBIfam" id="TIGR00172">
    <property type="entry name" value="maf"/>
    <property type="match status" value="1"/>
</dbReference>
<dbReference type="NCBIfam" id="NF010946">
    <property type="entry name" value="PRK14366.1"/>
    <property type="match status" value="1"/>
</dbReference>
<dbReference type="PANTHER" id="PTHR43213">
    <property type="entry name" value="BIFUNCTIONAL DTTP/UTP PYROPHOSPHATASE/METHYLTRANSFERASE PROTEIN-RELATED"/>
    <property type="match status" value="1"/>
</dbReference>
<dbReference type="PANTHER" id="PTHR43213:SF5">
    <property type="entry name" value="BIFUNCTIONAL DTTP_UTP PYROPHOSPHATASE_METHYLTRANSFERASE PROTEIN-RELATED"/>
    <property type="match status" value="1"/>
</dbReference>
<dbReference type="Pfam" id="PF02545">
    <property type="entry name" value="Maf"/>
    <property type="match status" value="1"/>
</dbReference>
<dbReference type="PIRSF" id="PIRSF006305">
    <property type="entry name" value="Maf"/>
    <property type="match status" value="1"/>
</dbReference>
<dbReference type="SUPFAM" id="SSF52972">
    <property type="entry name" value="ITPase-like"/>
    <property type="match status" value="1"/>
</dbReference>
<sequence length="198" mass="22770">MIEQFLNNLILASSSERRIALLKQINIEPGLILPADIDEIPLRKELPKDYSIRMAKSKAEKIQSSNPDYFVLGIDTVVACGRRILLKAKNIEQAEKYIRLLSGRRHRVYTSVCLLTPDRSKQHIRTVVTIVKFKRLSEREIKYYLASEEWKNRAGGCNMQGLAGMFVLFLRGSYSSIIGLPLHETYCLLSNYFNLNLY</sequence>
<comment type="function">
    <text evidence="1">Nucleoside triphosphate pyrophosphatase that hydrolyzes dTTP and UTP. May have a dual role in cell division arrest and in preventing the incorporation of modified nucleotides into cellular nucleic acids.</text>
</comment>
<comment type="catalytic activity">
    <reaction evidence="1">
        <text>dTTP + H2O = dTMP + diphosphate + H(+)</text>
        <dbReference type="Rhea" id="RHEA:28534"/>
        <dbReference type="ChEBI" id="CHEBI:15377"/>
        <dbReference type="ChEBI" id="CHEBI:15378"/>
        <dbReference type="ChEBI" id="CHEBI:33019"/>
        <dbReference type="ChEBI" id="CHEBI:37568"/>
        <dbReference type="ChEBI" id="CHEBI:63528"/>
        <dbReference type="EC" id="3.6.1.9"/>
    </reaction>
</comment>
<comment type="catalytic activity">
    <reaction evidence="1">
        <text>UTP + H2O = UMP + diphosphate + H(+)</text>
        <dbReference type="Rhea" id="RHEA:29395"/>
        <dbReference type="ChEBI" id="CHEBI:15377"/>
        <dbReference type="ChEBI" id="CHEBI:15378"/>
        <dbReference type="ChEBI" id="CHEBI:33019"/>
        <dbReference type="ChEBI" id="CHEBI:46398"/>
        <dbReference type="ChEBI" id="CHEBI:57865"/>
        <dbReference type="EC" id="3.6.1.9"/>
    </reaction>
</comment>
<comment type="cofactor">
    <cofactor evidence="1">
        <name>a divalent metal cation</name>
        <dbReference type="ChEBI" id="CHEBI:60240"/>
    </cofactor>
</comment>
<comment type="subcellular location">
    <subcellularLocation>
        <location evidence="1">Cytoplasm</location>
    </subcellularLocation>
</comment>
<comment type="similarity">
    <text evidence="1">Belongs to the Maf family. YhdE subfamily.</text>
</comment>